<dbReference type="EMBL" id="X03561">
    <property type="protein sequence ID" value="CAA27248.1"/>
    <property type="molecule type" value="mRNA"/>
</dbReference>
<dbReference type="EMBL" id="X00135">
    <property type="protein sequence ID" value="CAA24968.1"/>
    <property type="molecule type" value="mRNA"/>
</dbReference>
<dbReference type="EMBL" id="S73519">
    <property type="protein sequence ID" value="AAB32312.1"/>
    <property type="molecule type" value="mRNA"/>
</dbReference>
<dbReference type="PIR" id="A93496">
    <property type="entry name" value="CTPGP"/>
</dbReference>
<dbReference type="RefSeq" id="NP_999023.1">
    <property type="nucleotide sequence ID" value="NM_213858.1"/>
</dbReference>
<dbReference type="BMRB" id="P01192"/>
<dbReference type="SMR" id="P01192"/>
<dbReference type="FunCoup" id="P01192">
    <property type="interactions" value="842"/>
</dbReference>
<dbReference type="STRING" id="9823.ENSSSCP00000024582"/>
<dbReference type="GlyCosmos" id="P01192">
    <property type="glycosylation" value="1 site, No reported glycans"/>
</dbReference>
<dbReference type="GlyGen" id="P01192">
    <property type="glycosylation" value="1 site"/>
</dbReference>
<dbReference type="MetOSite" id="P01192"/>
<dbReference type="PaxDb" id="9823-ENSSSCP00000024582"/>
<dbReference type="GeneID" id="396863"/>
<dbReference type="KEGG" id="ssc:396863"/>
<dbReference type="CTD" id="5443"/>
<dbReference type="eggNOG" id="ENOG502RZNY">
    <property type="taxonomic scope" value="Eukaryota"/>
</dbReference>
<dbReference type="InParanoid" id="P01192"/>
<dbReference type="OrthoDB" id="8962839at2759"/>
<dbReference type="Proteomes" id="UP000008227">
    <property type="component" value="Unplaced"/>
</dbReference>
<dbReference type="Proteomes" id="UP000314985">
    <property type="component" value="Unplaced"/>
</dbReference>
<dbReference type="Proteomes" id="UP000694570">
    <property type="component" value="Unplaced"/>
</dbReference>
<dbReference type="Proteomes" id="UP000694571">
    <property type="component" value="Unplaced"/>
</dbReference>
<dbReference type="Proteomes" id="UP000694720">
    <property type="component" value="Unplaced"/>
</dbReference>
<dbReference type="Proteomes" id="UP000694722">
    <property type="component" value="Unplaced"/>
</dbReference>
<dbReference type="Proteomes" id="UP000694723">
    <property type="component" value="Unplaced"/>
</dbReference>
<dbReference type="Proteomes" id="UP000694724">
    <property type="component" value="Unplaced"/>
</dbReference>
<dbReference type="Proteomes" id="UP000694725">
    <property type="component" value="Unplaced"/>
</dbReference>
<dbReference type="Proteomes" id="UP000694726">
    <property type="component" value="Unplaced"/>
</dbReference>
<dbReference type="Proteomes" id="UP000694727">
    <property type="component" value="Unplaced"/>
</dbReference>
<dbReference type="Proteomes" id="UP000694728">
    <property type="component" value="Unplaced"/>
</dbReference>
<dbReference type="GO" id="GO:0005615">
    <property type="term" value="C:extracellular space"/>
    <property type="evidence" value="ECO:0000318"/>
    <property type="project" value="GO_Central"/>
</dbReference>
<dbReference type="GO" id="GO:0030141">
    <property type="term" value="C:secretory granule"/>
    <property type="evidence" value="ECO:0000318"/>
    <property type="project" value="GO_Central"/>
</dbReference>
<dbReference type="GO" id="GO:0001664">
    <property type="term" value="F:G protein-coupled receptor binding"/>
    <property type="evidence" value="ECO:0000318"/>
    <property type="project" value="GO_Central"/>
</dbReference>
<dbReference type="GO" id="GO:0005179">
    <property type="term" value="F:hormone activity"/>
    <property type="evidence" value="ECO:0007669"/>
    <property type="project" value="UniProtKB-KW"/>
</dbReference>
<dbReference type="GO" id="GO:0007218">
    <property type="term" value="P:neuropeptide signaling pathway"/>
    <property type="evidence" value="ECO:0007669"/>
    <property type="project" value="UniProtKB-KW"/>
</dbReference>
<dbReference type="GO" id="GO:2000852">
    <property type="term" value="P:regulation of corticosterone secretion"/>
    <property type="evidence" value="ECO:0000318"/>
    <property type="project" value="GO_Central"/>
</dbReference>
<dbReference type="InterPro" id="IPR013531">
    <property type="entry name" value="Mcrtin_ACTH_cent"/>
</dbReference>
<dbReference type="InterPro" id="IPR013593">
    <property type="entry name" value="Melanocortin_N"/>
</dbReference>
<dbReference type="InterPro" id="IPR013532">
    <property type="entry name" value="Opioid_neuropept"/>
</dbReference>
<dbReference type="InterPro" id="IPR001941">
    <property type="entry name" value="PMOC"/>
</dbReference>
<dbReference type="InterPro" id="IPR050878">
    <property type="entry name" value="POMC-derived_peptides"/>
</dbReference>
<dbReference type="PANTHER" id="PTHR11416">
    <property type="entry name" value="PRO-OPIOMELANOCORTIN"/>
    <property type="match status" value="1"/>
</dbReference>
<dbReference type="PANTHER" id="PTHR11416:SF7">
    <property type="entry name" value="PRO-OPIOMELANOCORTIN"/>
    <property type="match status" value="1"/>
</dbReference>
<dbReference type="Pfam" id="PF00976">
    <property type="entry name" value="ACTH_domain"/>
    <property type="match status" value="3"/>
</dbReference>
<dbReference type="Pfam" id="PF08384">
    <property type="entry name" value="NPP"/>
    <property type="match status" value="1"/>
</dbReference>
<dbReference type="Pfam" id="PF08035">
    <property type="entry name" value="Op_neuropeptide"/>
    <property type="match status" value="1"/>
</dbReference>
<dbReference type="PRINTS" id="PR00383">
    <property type="entry name" value="MELANOCORTIN"/>
</dbReference>
<dbReference type="SMART" id="SM01363">
    <property type="entry name" value="ACTH_domain"/>
    <property type="match status" value="2"/>
</dbReference>
<dbReference type="SMART" id="SM01364">
    <property type="entry name" value="NPP"/>
    <property type="match status" value="1"/>
</dbReference>
<dbReference type="SMART" id="SM01365">
    <property type="entry name" value="Op_neuropeptide"/>
    <property type="match status" value="1"/>
</dbReference>
<feature type="signal peptide" evidence="1">
    <location>
        <begin position="1"/>
        <end position="26"/>
    </location>
</feature>
<feature type="peptide" id="PRO_0000025015" description="NPP">
    <location>
        <begin position="27"/>
        <end position="106"/>
    </location>
</feature>
<feature type="peptide" id="PRO_0000025016" description="Melanotropin gamma">
    <location>
        <begin position="77"/>
        <end position="87"/>
    </location>
</feature>
<feature type="propeptide" id="PRO_0000025017">
    <location>
        <begin position="109"/>
        <end position="133"/>
    </location>
</feature>
<feature type="peptide" id="PRO_0000025018" description="Corticotropin">
    <location>
        <begin position="136"/>
        <end position="174"/>
    </location>
</feature>
<feature type="peptide" id="PRO_0000025019" description="Melanocyte-stimulating hormone alpha">
    <location>
        <begin position="136"/>
        <end position="148"/>
    </location>
</feature>
<feature type="peptide" id="PRO_0000025020" description="Corticotropin-like intermediary peptide">
    <location>
        <begin position="154"/>
        <end position="174"/>
    </location>
</feature>
<feature type="peptide" id="PRO_0000025021" description="Lipotropin beta">
    <location>
        <begin position="177"/>
        <end position="267"/>
    </location>
</feature>
<feature type="peptide" id="PRO_0000025022" description="Lipotropin gamma">
    <location>
        <begin position="177"/>
        <end position="234"/>
    </location>
</feature>
<feature type="peptide" id="PRO_0000025023" description="Melanocyte-stimulating hormone beta">
    <location>
        <begin position="217"/>
        <end position="234"/>
    </location>
</feature>
<feature type="peptide" id="PRO_0000025024" description="Beta-endorphin">
    <location>
        <begin position="237"/>
        <end position="267"/>
    </location>
</feature>
<feature type="peptide" id="PRO_0000025025" description="Met-enkephalin">
    <location>
        <begin position="237"/>
        <end position="241"/>
    </location>
</feature>
<feature type="region of interest" description="Disordered" evidence="6">
    <location>
        <begin position="88"/>
        <end position="156"/>
    </location>
</feature>
<feature type="region of interest" description="Disordered" evidence="6">
    <location>
        <begin position="215"/>
        <end position="242"/>
    </location>
</feature>
<feature type="compositionally biased region" description="Gly residues" evidence="6">
    <location>
        <begin position="94"/>
        <end position="105"/>
    </location>
</feature>
<feature type="compositionally biased region" description="Basic and acidic residues" evidence="6">
    <location>
        <begin position="131"/>
        <end position="143"/>
    </location>
</feature>
<feature type="compositionally biased region" description="Basic and acidic residues" evidence="6">
    <location>
        <begin position="215"/>
        <end position="237"/>
    </location>
</feature>
<feature type="modified residue" description="Phenylalanine amide" evidence="2">
    <location>
        <position position="87"/>
    </location>
</feature>
<feature type="modified residue" description="N-acetylserine; in Corticotropin" evidence="3">
    <location>
        <position position="136"/>
    </location>
</feature>
<feature type="modified residue" description="Valine amide" evidence="7">
    <location>
        <position position="148"/>
    </location>
</feature>
<feature type="glycosylation site" description="N-linked (GlcNAc...) asparagine" evidence="5">
    <location>
        <position position="91"/>
    </location>
</feature>
<feature type="sequence variant">
    <original>R</original>
    <variation>T</variation>
    <location>
        <position position="143"/>
    </location>
</feature>
<feature type="sequence conflict" description="In Ref. 3 and 4." evidence="8" ref="3 4">
    <original>G</original>
    <variation>S</variation>
    <location>
        <position position="6"/>
    </location>
</feature>
<feature type="sequence conflict" description="In Ref. 3 and 4." evidence="8" ref="3 4">
    <original>T</original>
    <variation>A</variation>
    <location>
        <position position="15"/>
    </location>
</feature>
<feature type="sequence conflict" description="In Ref. 3 and 4." evidence="8" ref="3 4">
    <original>G</original>
    <variation>E</variation>
    <location>
        <position position="23"/>
    </location>
</feature>
<feature type="sequence conflict" description="In Ref. 4." evidence="8" ref="4">
    <original>A</original>
    <variation>S</variation>
    <location>
        <position position="49"/>
    </location>
</feature>
<name>COLI_PIG</name>
<gene>
    <name type="primary">POMC</name>
</gene>
<protein>
    <recommendedName>
        <fullName>Pro-opiomelanocortin</fullName>
        <shortName>POMC</shortName>
    </recommendedName>
    <alternativeName>
        <fullName>Corticotropin-lipotropin</fullName>
    </alternativeName>
    <component>
        <recommendedName>
            <fullName>NPP</fullName>
        </recommendedName>
    </component>
    <component>
        <recommendedName>
            <fullName>Melanotropin gamma</fullName>
        </recommendedName>
        <alternativeName>
            <fullName>Gamma-MSH</fullName>
        </alternativeName>
    </component>
    <component>
        <recommendedName>
            <fullName>Corticotropin</fullName>
        </recommendedName>
        <alternativeName>
            <fullName>Adrenocorticotropic hormone</fullName>
            <shortName>ACTH</shortName>
        </alternativeName>
    </component>
    <component>
        <recommendedName>
            <fullName>Melanocyte-stimulating hormone alpha</fullName>
            <shortName>Alpha-MSH</shortName>
        </recommendedName>
        <alternativeName>
            <fullName>Melanotropin alpha</fullName>
        </alternativeName>
    </component>
    <component>
        <recommendedName>
            <fullName>Corticotropin-like intermediary peptide</fullName>
            <shortName>CLIP</shortName>
        </recommendedName>
    </component>
    <component>
        <recommendedName>
            <fullName>Lipotropin beta</fullName>
        </recommendedName>
        <alternativeName>
            <fullName>Beta-LPH</fullName>
        </alternativeName>
    </component>
    <component>
        <recommendedName>
            <fullName>Lipotropin gamma</fullName>
        </recommendedName>
        <alternativeName>
            <fullName>Gamma-LPH</fullName>
        </alternativeName>
    </component>
    <component>
        <recommendedName>
            <fullName>Melanocyte-stimulating hormone beta</fullName>
            <shortName>Beta-MSH</shortName>
        </recommendedName>
        <alternativeName>
            <fullName>Melanotropin beta</fullName>
        </alternativeName>
    </component>
    <component>
        <recommendedName>
            <fullName>Beta-endorphin</fullName>
        </recommendedName>
    </component>
    <component>
        <recommendedName>
            <fullName>Met-enkephalin</fullName>
        </recommendedName>
    </component>
</protein>
<proteinExistence type="evidence at protein level"/>
<comment type="function">
    <molecule>Corticotropin</molecule>
    <text>Stimulates the adrenal glands to release cortisol.</text>
</comment>
<comment type="function">
    <molecule>Melanocyte-stimulating hormone alpha</molecule>
    <text>Anorexigenic peptide. Increases the pigmentation of skin by increasing melanin production in melanocytes.</text>
</comment>
<comment type="function">
    <molecule>Melanocyte-stimulating hormone beta</molecule>
    <text>Increases the pigmentation of skin by increasing melanin production in melanocytes.</text>
</comment>
<comment type="function">
    <molecule>Beta-endorphin</molecule>
    <text>Endogenous orexigenic opiate.</text>
</comment>
<comment type="function">
    <molecule>Met-enkephalin</molecule>
    <text>Endogenous opiate.</text>
</comment>
<comment type="subcellular location">
    <subcellularLocation>
        <location evidence="4">Secreted</location>
    </subcellularLocation>
    <text evidence="4">Melanocyte-stimulating hormone alpha and beta-endorphin are stored in separate granules in hypothalamic POMC neurons, suggesting that secretion may be under the control of different regulatory mechanisms.</text>
</comment>
<comment type="tissue specificity">
    <text>ACTH and MSH are produced by the pituitary gland.</text>
</comment>
<comment type="PTM">
    <text>Specific enzymatic cleavages at paired basic residues yield the different active peptides.</text>
</comment>
<comment type="similarity">
    <text evidence="8">Belongs to the POMC family.</text>
</comment>
<keyword id="KW-0007">Acetylation</keyword>
<keyword id="KW-0027">Amidation</keyword>
<keyword id="KW-0165">Cleavage on pair of basic residues</keyword>
<keyword id="KW-0903">Direct protein sequencing</keyword>
<keyword id="KW-0257">Endorphin</keyword>
<keyword id="KW-0325">Glycoprotein</keyword>
<keyword id="KW-0372">Hormone</keyword>
<keyword id="KW-1185">Reference proteome</keyword>
<keyword id="KW-0964">Secreted</keyword>
<keyword id="KW-0732">Signal</keyword>
<accession>P01192</accession>
<accession>Q95246</accession>
<reference key="1">
    <citation type="journal article" date="1986" name="Biochim. Biophys. Acta">
        <title>Sequence of the cDNA encoding porcine pro-opiomelanocortin.</title>
        <authorList>
            <person name="Gossard F.J."/>
            <person name="Chang A.C.Y."/>
            <person name="Cohen S.N."/>
        </authorList>
    </citation>
    <scope>NUCLEOTIDE SEQUENCE [MRNA]</scope>
</reference>
<reference key="2">
    <citation type="journal article" date="1983" name="Nucleic Acids Res.">
        <title>Complete structure of the porcine pro-opiomelanocortin mRNA derived from the nucleotide sequence of cloned cDNA.</title>
        <authorList>
            <person name="Boileau G."/>
            <person name="Barbeau C."/>
            <person name="Jeannotte L."/>
            <person name="Chretien M."/>
            <person name="Drouin J."/>
        </authorList>
    </citation>
    <scope>NUCLEOTIDE SEQUENCE [MRNA]</scope>
</reference>
<reference key="3">
    <citation type="journal article" date="1994" name="Mol. Cell. Endocrinol.">
        <title>Presence of the same transcript of pro-opiomelanocortin (POMC) genes in the porcine anterior and intermediate pituitary lobes.</title>
        <authorList>
            <person name="Gen K."/>
            <person name="Hirai T."/>
            <person name="Kato T."/>
            <person name="Kato Y."/>
        </authorList>
    </citation>
    <scope>NUCLEOTIDE SEQUENCE [MRNA]</scope>
</reference>
<reference key="4">
    <citation type="journal article" date="1984" name="J. Biol. Chem.">
        <title>5' sequence of porcine and rat pro-opiomelanocortin mRNA. One porcine and two rat forms.</title>
        <authorList>
            <person name="Oates E."/>
            <person name="Herbert E."/>
        </authorList>
    </citation>
    <scope>NUCLEOTIDE SEQUENCE [MRNA]</scope>
</reference>
<reference key="5">
    <citation type="journal article" date="1956" name="J. Am. Chem. Soc.">
        <title>Studies with corticotropin. III. Determination of the structure of beta-corticotropin and its active degradation products.</title>
        <authorList>
            <person name="Shepherd R.G."/>
            <person name="Willson S.D."/>
            <person name="Howard K.S."/>
            <person name="Bell P.H."/>
            <person name="Davies D.S."/>
            <person name="Davis S.B."/>
            <person name="Eigner E.A."/>
            <person name="Shakespeare N.E."/>
        </authorList>
    </citation>
    <scope>PROTEIN SEQUENCE OF 136-174</scope>
</reference>
<reference key="6">
    <citation type="journal article" date="1972" name="Nature New Biol.">
        <title>Revised amino-acid sequences for porcine and human adrenocorticotrophic hormone.</title>
        <authorList>
            <person name="Riniker B."/>
            <person name="Sieber P."/>
            <person name="Rittel W."/>
            <person name="Zuber H."/>
        </authorList>
    </citation>
    <scope>SEQUENCE REVISION TO 160 AND 165</scope>
</reference>
<reference key="7">
    <citation type="journal article" date="1972" name="Acta Biochim. Biophys. Acad. Sci. Hung.">
        <title>Re-examination of the sequence of the C-terminal tryptic fragment from porcine adrenocorticotropic hormone.</title>
        <authorList>
            <person name="Graf L."/>
        </authorList>
    </citation>
    <scope>SEQUENCE REVISION (CORTICOTROPIN)</scope>
</reference>
<reference key="8">
    <citation type="journal article" date="1990" name="Eur. J. Biochem.">
        <title>Isolation and full structural characterisation of six adrenocorticotropin-like peptides from porcine pituitary gland. Identification of three novel fragments of adrenocorticotropin and of two forms of a novel adrenocorticotropin-like peptide.</title>
        <authorList>
            <person name="Voigt K."/>
            <person name="Stegmaier W."/>
            <person name="McGregor G.P."/>
            <person name="Roesch H."/>
            <person name="Seliger H."/>
        </authorList>
    </citation>
    <scope>PROTEIN SEQUENCE OF 136-174</scope>
</reference>
<reference key="9">
    <citation type="journal article" date="1957" name="Nature">
        <title>Amino-acid sequence of the alpha-melanocyte-stimulating hormone.</title>
        <authorList>
            <person name="Harris J.I."/>
            <person name="Lerner A.B."/>
        </authorList>
    </citation>
    <scope>PROTEIN SEQUENCE OF 136-148</scope>
    <scope>AMIDATION AT VAL-148</scope>
</reference>
<reference key="10">
    <citation type="journal article" date="1971" name="Biochim. Biophys. Acta">
        <title>Amino acid sequence of porcine beta-lipotropic hormone.</title>
        <authorList>
            <person name="Graf L."/>
            <person name="Barat E."/>
            <person name="Cseh G."/>
            <person name="Sajgo M."/>
        </authorList>
    </citation>
    <scope>PROTEIN SEQUENCE OF 177-267</scope>
</reference>
<reference key="11">
    <citation type="book" date="1972" name="Chemistry and biology of peptides">
        <title>Complete amino acid sequence of porcine beta-lipotropic hormone (beta-LPH).</title>
        <editorList>
            <person name="Meienhofer J."/>
        </editorList>
        <authorList>
            <person name="Gilardeau C."/>
            <person name="Chretien M."/>
        </authorList>
    </citation>
    <scope>SEQUENCE REVISION (LIPOTROPIN)</scope>
</reference>
<reference key="12">
    <citation type="journal article" date="1972" name="Biokhimiia">
        <title>Complete amino acid sequence in the molecule of porcine beta-lipotropin.</title>
        <authorList>
            <person name="Pankov Y.A."/>
            <person name="Yudaev N.A."/>
        </authorList>
    </citation>
    <scope>SEQUENCE REVISION TO 211</scope>
</reference>
<reference key="13">
    <citation type="journal article" date="1956" name="Nature">
        <title>Amino-acid sequence of a melanophore-stimulating peptide.</title>
        <authorList>
            <person name="Harris J.I."/>
            <person name="Roos P."/>
        </authorList>
    </citation>
    <scope>PROTEIN SEQUENCE OF 217-234</scope>
</reference>
<reference key="14">
    <citation type="journal article" date="1957" name="J. Am. Chem. Soc.">
        <title>The structure of the beta-melanocyte-stimulating hormone.</title>
        <authorList>
            <person name="Geschwind I.I."/>
            <person name="Li C.H."/>
            <person name="Barnafi L."/>
        </authorList>
    </citation>
    <scope>PROTEIN SEQUENCE OF 217-234</scope>
</reference>
<reference key="15">
    <citation type="journal article" date="1975" name="Nature">
        <title>Identification of two related pentapeptides from the brain with potent opiate agonist activity.</title>
        <authorList>
            <person name="Hughes J."/>
            <person name="Smith T.W."/>
            <person name="Kosterlitz H.W."/>
            <person name="Fothergill L.A."/>
            <person name="Morgan B.A."/>
            <person name="Morris H.R."/>
        </authorList>
    </citation>
    <scope>PROTEIN SEQUENCE OF 237-241</scope>
</reference>
<reference key="16">
    <citation type="journal article" date="1976" name="Acta Biochim. Biophys. Acad. Sci. Hung.">
        <title>Isolation of a COOH-terminal beta-lipotropin fragment (residues 61-91) with morphine-like analgesic activity from porcine pituitary glands.</title>
        <authorList>
            <person name="Graf L."/>
            <person name="Barat E."/>
            <person name="Patthy A."/>
        </authorList>
    </citation>
    <scope>PROTEIN SEQUENCE OF 237-267</scope>
</reference>
<organism>
    <name type="scientific">Sus scrofa</name>
    <name type="common">Pig</name>
    <dbReference type="NCBI Taxonomy" id="9823"/>
    <lineage>
        <taxon>Eukaryota</taxon>
        <taxon>Metazoa</taxon>
        <taxon>Chordata</taxon>
        <taxon>Craniata</taxon>
        <taxon>Vertebrata</taxon>
        <taxon>Euteleostomi</taxon>
        <taxon>Mammalia</taxon>
        <taxon>Eutheria</taxon>
        <taxon>Laurasiatheria</taxon>
        <taxon>Artiodactyla</taxon>
        <taxon>Suina</taxon>
        <taxon>Suidae</taxon>
        <taxon>Sus</taxon>
    </lineage>
</organism>
<sequence length="267" mass="28895">MPRLCGSRSGALLLTLLLQASMGVRGWCLESSQCQDLSTESNLLACIRACKPDLSAETPVFPGNGDAQPLTENPRKYVMGHFRWDRFGRRNGSSSGGGGGGGGAGQKREEEEVAAGEGPGPRGDGVAPGPRQDKRSYSMEHFRWGKPVGKKRRPVKVYPNGAEDELAEAFPLEFRRELAGAPPEPARDPEAPAEGAAARAELEYGLVAEAEAAEKKDEGPYKMEHFRWGSPPKDKRYGGFMTSEKSQTPLVTLFKNAIVKNAHKKGQ</sequence>
<evidence type="ECO:0000250" key="1"/>
<evidence type="ECO:0000250" key="2">
    <source>
        <dbReference type="UniProtKB" id="P01190"/>
    </source>
</evidence>
<evidence type="ECO:0000250" key="3">
    <source>
        <dbReference type="UniProtKB" id="P01191"/>
    </source>
</evidence>
<evidence type="ECO:0000250" key="4">
    <source>
        <dbReference type="UniProtKB" id="P01193"/>
    </source>
</evidence>
<evidence type="ECO:0000255" key="5"/>
<evidence type="ECO:0000256" key="6">
    <source>
        <dbReference type="SAM" id="MobiDB-lite"/>
    </source>
</evidence>
<evidence type="ECO:0000269" key="7">
    <source>
    </source>
</evidence>
<evidence type="ECO:0000305" key="8"/>